<sequence>MPQASPTSAGHAAENQALEFLQGQGLRLLTRNWRCKGGELDLVMLDTDTVVFVEVRYRLHAGFGGALGSIDGRKQKRLVHAASLFLLKESCWANHPCRFDVVALQGSHHAGRPLQWLKNAFEC</sequence>
<gene>
    <name type="ordered locus">PputW619_0932</name>
</gene>
<reference key="1">
    <citation type="submission" date="2008-02" db="EMBL/GenBank/DDBJ databases">
        <title>Complete sequence of Pseudomonas putida W619.</title>
        <authorList>
            <person name="Copeland A."/>
            <person name="Lucas S."/>
            <person name="Lapidus A."/>
            <person name="Barry K."/>
            <person name="Detter J.C."/>
            <person name="Glavina del Rio T."/>
            <person name="Dalin E."/>
            <person name="Tice H."/>
            <person name="Pitluck S."/>
            <person name="Chain P."/>
            <person name="Malfatti S."/>
            <person name="Shin M."/>
            <person name="Vergez L."/>
            <person name="Schmutz J."/>
            <person name="Larimer F."/>
            <person name="Land M."/>
            <person name="Hauser L."/>
            <person name="Kyrpides N."/>
            <person name="Kim E."/>
            <person name="Taghavi S."/>
            <person name="Vangronsveld D."/>
            <person name="van der Lelie D."/>
            <person name="Richardson P."/>
        </authorList>
    </citation>
    <scope>NUCLEOTIDE SEQUENCE [LARGE SCALE GENOMIC DNA]</scope>
    <source>
        <strain>W619</strain>
    </source>
</reference>
<accession>B1J1X8</accession>
<name>Y932_PSEPW</name>
<protein>
    <recommendedName>
        <fullName evidence="1">UPF0102 protein PputW619_0932</fullName>
    </recommendedName>
</protein>
<evidence type="ECO:0000255" key="1">
    <source>
        <dbReference type="HAMAP-Rule" id="MF_00048"/>
    </source>
</evidence>
<feature type="chain" id="PRO_0000336234" description="UPF0102 protein PputW619_0932">
    <location>
        <begin position="1"/>
        <end position="123"/>
    </location>
</feature>
<dbReference type="EMBL" id="CP000949">
    <property type="protein sequence ID" value="ACA71437.1"/>
    <property type="molecule type" value="Genomic_DNA"/>
</dbReference>
<dbReference type="SMR" id="B1J1X8"/>
<dbReference type="STRING" id="390235.PputW619_0932"/>
<dbReference type="KEGG" id="ppw:PputW619_0932"/>
<dbReference type="eggNOG" id="COG0792">
    <property type="taxonomic scope" value="Bacteria"/>
</dbReference>
<dbReference type="HOGENOM" id="CLU_115353_1_0_6"/>
<dbReference type="OrthoDB" id="9794876at2"/>
<dbReference type="GO" id="GO:0003676">
    <property type="term" value="F:nucleic acid binding"/>
    <property type="evidence" value="ECO:0007669"/>
    <property type="project" value="InterPro"/>
</dbReference>
<dbReference type="CDD" id="cd20736">
    <property type="entry name" value="PoNe_Nuclease"/>
    <property type="match status" value="1"/>
</dbReference>
<dbReference type="Gene3D" id="3.40.1350.10">
    <property type="match status" value="1"/>
</dbReference>
<dbReference type="HAMAP" id="MF_00048">
    <property type="entry name" value="UPF0102"/>
    <property type="match status" value="1"/>
</dbReference>
<dbReference type="InterPro" id="IPR011335">
    <property type="entry name" value="Restrct_endonuc-II-like"/>
</dbReference>
<dbReference type="InterPro" id="IPR011856">
    <property type="entry name" value="tRNA_endonuc-like_dom_sf"/>
</dbReference>
<dbReference type="InterPro" id="IPR003509">
    <property type="entry name" value="UPF0102_YraN-like"/>
</dbReference>
<dbReference type="NCBIfam" id="NF009150">
    <property type="entry name" value="PRK12497.1-3"/>
    <property type="match status" value="1"/>
</dbReference>
<dbReference type="NCBIfam" id="TIGR00252">
    <property type="entry name" value="YraN family protein"/>
    <property type="match status" value="1"/>
</dbReference>
<dbReference type="PANTHER" id="PTHR34039">
    <property type="entry name" value="UPF0102 PROTEIN YRAN"/>
    <property type="match status" value="1"/>
</dbReference>
<dbReference type="PANTHER" id="PTHR34039:SF1">
    <property type="entry name" value="UPF0102 PROTEIN YRAN"/>
    <property type="match status" value="1"/>
</dbReference>
<dbReference type="Pfam" id="PF02021">
    <property type="entry name" value="UPF0102"/>
    <property type="match status" value="1"/>
</dbReference>
<dbReference type="SUPFAM" id="SSF52980">
    <property type="entry name" value="Restriction endonuclease-like"/>
    <property type="match status" value="1"/>
</dbReference>
<proteinExistence type="inferred from homology"/>
<organism>
    <name type="scientific">Pseudomonas putida (strain W619)</name>
    <dbReference type="NCBI Taxonomy" id="390235"/>
    <lineage>
        <taxon>Bacteria</taxon>
        <taxon>Pseudomonadati</taxon>
        <taxon>Pseudomonadota</taxon>
        <taxon>Gammaproteobacteria</taxon>
        <taxon>Pseudomonadales</taxon>
        <taxon>Pseudomonadaceae</taxon>
        <taxon>Pseudomonas</taxon>
    </lineage>
</organism>
<comment type="similarity">
    <text evidence="1">Belongs to the UPF0102 family.</text>
</comment>